<gene>
    <name evidence="1" type="primary">rpsI</name>
    <name type="ordered locus">Mlg_2241</name>
</gene>
<proteinExistence type="inferred from homology"/>
<accession>Q0A6F4</accession>
<protein>
    <recommendedName>
        <fullName evidence="1">Small ribosomal subunit protein uS9</fullName>
    </recommendedName>
    <alternativeName>
        <fullName evidence="2">30S ribosomal protein S9</fullName>
    </alternativeName>
</protein>
<evidence type="ECO:0000255" key="1">
    <source>
        <dbReference type="HAMAP-Rule" id="MF_00532"/>
    </source>
</evidence>
<evidence type="ECO:0000305" key="2"/>
<sequence>MAEQQYYGTGRRKTSSARVFLRPGSGDIKVNGRSLDEYFGRETARMIVRQPLELVDATEQFDVQVTVAGGGPSGQAGAIRHGITRALVQYDEALKQPLSKAGYVTRDARMVERKKIGLHKARRATQFSKR</sequence>
<keyword id="KW-1185">Reference proteome</keyword>
<keyword id="KW-0687">Ribonucleoprotein</keyword>
<keyword id="KW-0689">Ribosomal protein</keyword>
<name>RS9_ALKEH</name>
<dbReference type="EMBL" id="CP000453">
    <property type="protein sequence ID" value="ABI57583.1"/>
    <property type="molecule type" value="Genomic_DNA"/>
</dbReference>
<dbReference type="RefSeq" id="WP_011629977.1">
    <property type="nucleotide sequence ID" value="NC_008340.1"/>
</dbReference>
<dbReference type="SMR" id="Q0A6F4"/>
<dbReference type="KEGG" id="aeh:Mlg_2241"/>
<dbReference type="eggNOG" id="COG0103">
    <property type="taxonomic scope" value="Bacteria"/>
</dbReference>
<dbReference type="HOGENOM" id="CLU_046483_2_1_6"/>
<dbReference type="OrthoDB" id="9803965at2"/>
<dbReference type="Proteomes" id="UP000001962">
    <property type="component" value="Chromosome"/>
</dbReference>
<dbReference type="GO" id="GO:0022627">
    <property type="term" value="C:cytosolic small ribosomal subunit"/>
    <property type="evidence" value="ECO:0007669"/>
    <property type="project" value="TreeGrafter"/>
</dbReference>
<dbReference type="GO" id="GO:0003723">
    <property type="term" value="F:RNA binding"/>
    <property type="evidence" value="ECO:0007669"/>
    <property type="project" value="TreeGrafter"/>
</dbReference>
<dbReference type="GO" id="GO:0003735">
    <property type="term" value="F:structural constituent of ribosome"/>
    <property type="evidence" value="ECO:0007669"/>
    <property type="project" value="InterPro"/>
</dbReference>
<dbReference type="GO" id="GO:0006412">
    <property type="term" value="P:translation"/>
    <property type="evidence" value="ECO:0007669"/>
    <property type="project" value="UniProtKB-UniRule"/>
</dbReference>
<dbReference type="FunFam" id="3.30.230.10:FF:000001">
    <property type="entry name" value="30S ribosomal protein S9"/>
    <property type="match status" value="1"/>
</dbReference>
<dbReference type="Gene3D" id="3.30.230.10">
    <property type="match status" value="1"/>
</dbReference>
<dbReference type="HAMAP" id="MF_00532_B">
    <property type="entry name" value="Ribosomal_uS9_B"/>
    <property type="match status" value="1"/>
</dbReference>
<dbReference type="InterPro" id="IPR020568">
    <property type="entry name" value="Ribosomal_Su5_D2-typ_SF"/>
</dbReference>
<dbReference type="InterPro" id="IPR000754">
    <property type="entry name" value="Ribosomal_uS9"/>
</dbReference>
<dbReference type="InterPro" id="IPR023035">
    <property type="entry name" value="Ribosomal_uS9_bac/plastid"/>
</dbReference>
<dbReference type="InterPro" id="IPR020574">
    <property type="entry name" value="Ribosomal_uS9_CS"/>
</dbReference>
<dbReference type="InterPro" id="IPR014721">
    <property type="entry name" value="Ribsml_uS5_D2-typ_fold_subgr"/>
</dbReference>
<dbReference type="NCBIfam" id="NF001099">
    <property type="entry name" value="PRK00132.1"/>
    <property type="match status" value="1"/>
</dbReference>
<dbReference type="PANTHER" id="PTHR21569">
    <property type="entry name" value="RIBOSOMAL PROTEIN S9"/>
    <property type="match status" value="1"/>
</dbReference>
<dbReference type="PANTHER" id="PTHR21569:SF1">
    <property type="entry name" value="SMALL RIBOSOMAL SUBUNIT PROTEIN US9M"/>
    <property type="match status" value="1"/>
</dbReference>
<dbReference type="Pfam" id="PF00380">
    <property type="entry name" value="Ribosomal_S9"/>
    <property type="match status" value="1"/>
</dbReference>
<dbReference type="SUPFAM" id="SSF54211">
    <property type="entry name" value="Ribosomal protein S5 domain 2-like"/>
    <property type="match status" value="1"/>
</dbReference>
<dbReference type="PROSITE" id="PS00360">
    <property type="entry name" value="RIBOSOMAL_S9"/>
    <property type="match status" value="1"/>
</dbReference>
<reference key="1">
    <citation type="submission" date="2006-08" db="EMBL/GenBank/DDBJ databases">
        <title>Complete sequence of Alkalilimnicola ehrilichei MLHE-1.</title>
        <authorList>
            <person name="Copeland A."/>
            <person name="Lucas S."/>
            <person name="Lapidus A."/>
            <person name="Barry K."/>
            <person name="Detter J.C."/>
            <person name="Glavina del Rio T."/>
            <person name="Hammon N."/>
            <person name="Israni S."/>
            <person name="Dalin E."/>
            <person name="Tice H."/>
            <person name="Pitluck S."/>
            <person name="Sims D."/>
            <person name="Brettin T."/>
            <person name="Bruce D."/>
            <person name="Han C."/>
            <person name="Tapia R."/>
            <person name="Gilna P."/>
            <person name="Schmutz J."/>
            <person name="Larimer F."/>
            <person name="Land M."/>
            <person name="Hauser L."/>
            <person name="Kyrpides N."/>
            <person name="Mikhailova N."/>
            <person name="Oremland R.S."/>
            <person name="Hoeft S.E."/>
            <person name="Switzer-Blum J."/>
            <person name="Kulp T."/>
            <person name="King G."/>
            <person name="Tabita R."/>
            <person name="Witte B."/>
            <person name="Santini J.M."/>
            <person name="Basu P."/>
            <person name="Hollibaugh J.T."/>
            <person name="Xie G."/>
            <person name="Stolz J.F."/>
            <person name="Richardson P."/>
        </authorList>
    </citation>
    <scope>NUCLEOTIDE SEQUENCE [LARGE SCALE GENOMIC DNA]</scope>
    <source>
        <strain>ATCC BAA-1101 / DSM 17681 / MLHE-1</strain>
    </source>
</reference>
<feature type="chain" id="PRO_1000051152" description="Small ribosomal subunit protein uS9">
    <location>
        <begin position="1"/>
        <end position="130"/>
    </location>
</feature>
<comment type="similarity">
    <text evidence="1">Belongs to the universal ribosomal protein uS9 family.</text>
</comment>
<organism>
    <name type="scientific">Alkalilimnicola ehrlichii (strain ATCC BAA-1101 / DSM 17681 / MLHE-1)</name>
    <dbReference type="NCBI Taxonomy" id="187272"/>
    <lineage>
        <taxon>Bacteria</taxon>
        <taxon>Pseudomonadati</taxon>
        <taxon>Pseudomonadota</taxon>
        <taxon>Gammaproteobacteria</taxon>
        <taxon>Chromatiales</taxon>
        <taxon>Ectothiorhodospiraceae</taxon>
        <taxon>Alkalilimnicola</taxon>
    </lineage>
</organism>